<reference key="1">
    <citation type="submission" date="2009-07" db="EMBL/GenBank/DDBJ databases">
        <title>Complete sequence of Pectobacterium carotovorum subsp. carotovorum PC1.</title>
        <authorList>
            <consortium name="US DOE Joint Genome Institute"/>
            <person name="Lucas S."/>
            <person name="Copeland A."/>
            <person name="Lapidus A."/>
            <person name="Glavina del Rio T."/>
            <person name="Tice H."/>
            <person name="Bruce D."/>
            <person name="Goodwin L."/>
            <person name="Pitluck S."/>
            <person name="Munk A.C."/>
            <person name="Brettin T."/>
            <person name="Detter J.C."/>
            <person name="Han C."/>
            <person name="Tapia R."/>
            <person name="Larimer F."/>
            <person name="Land M."/>
            <person name="Hauser L."/>
            <person name="Kyrpides N."/>
            <person name="Mikhailova N."/>
            <person name="Balakrishnan V."/>
            <person name="Glasner J."/>
            <person name="Perna N.T."/>
        </authorList>
    </citation>
    <scope>NUCLEOTIDE SEQUENCE [LARGE SCALE GENOMIC DNA]</scope>
    <source>
        <strain>PC1</strain>
    </source>
</reference>
<accession>C6DFS5</accession>
<protein>
    <recommendedName>
        <fullName evidence="1">Small ribosomal subunit protein uS11</fullName>
    </recommendedName>
    <alternativeName>
        <fullName evidence="2">30S ribosomal protein S11</fullName>
    </alternativeName>
</protein>
<name>RS11_PECCP</name>
<dbReference type="EMBL" id="CP001657">
    <property type="protein sequence ID" value="ACT14814.1"/>
    <property type="molecule type" value="Genomic_DNA"/>
</dbReference>
<dbReference type="RefSeq" id="WP_002919257.1">
    <property type="nucleotide sequence ID" value="NC_012917.1"/>
</dbReference>
<dbReference type="SMR" id="C6DFS5"/>
<dbReference type="STRING" id="561230.PC1_3799"/>
<dbReference type="GeneID" id="97125494"/>
<dbReference type="KEGG" id="pct:PC1_3799"/>
<dbReference type="eggNOG" id="COG0100">
    <property type="taxonomic scope" value="Bacteria"/>
</dbReference>
<dbReference type="HOGENOM" id="CLU_072439_5_0_6"/>
<dbReference type="OrthoDB" id="9806415at2"/>
<dbReference type="Proteomes" id="UP000002736">
    <property type="component" value="Chromosome"/>
</dbReference>
<dbReference type="GO" id="GO:1990904">
    <property type="term" value="C:ribonucleoprotein complex"/>
    <property type="evidence" value="ECO:0007669"/>
    <property type="project" value="UniProtKB-KW"/>
</dbReference>
<dbReference type="GO" id="GO:0005840">
    <property type="term" value="C:ribosome"/>
    <property type="evidence" value="ECO:0007669"/>
    <property type="project" value="UniProtKB-KW"/>
</dbReference>
<dbReference type="GO" id="GO:0019843">
    <property type="term" value="F:rRNA binding"/>
    <property type="evidence" value="ECO:0007669"/>
    <property type="project" value="UniProtKB-UniRule"/>
</dbReference>
<dbReference type="GO" id="GO:0003735">
    <property type="term" value="F:structural constituent of ribosome"/>
    <property type="evidence" value="ECO:0007669"/>
    <property type="project" value="InterPro"/>
</dbReference>
<dbReference type="GO" id="GO:0006412">
    <property type="term" value="P:translation"/>
    <property type="evidence" value="ECO:0007669"/>
    <property type="project" value="UniProtKB-UniRule"/>
</dbReference>
<dbReference type="FunFam" id="3.30.420.80:FF:000001">
    <property type="entry name" value="30S ribosomal protein S11"/>
    <property type="match status" value="1"/>
</dbReference>
<dbReference type="Gene3D" id="3.30.420.80">
    <property type="entry name" value="Ribosomal protein S11"/>
    <property type="match status" value="1"/>
</dbReference>
<dbReference type="HAMAP" id="MF_01310">
    <property type="entry name" value="Ribosomal_uS11"/>
    <property type="match status" value="1"/>
</dbReference>
<dbReference type="InterPro" id="IPR001971">
    <property type="entry name" value="Ribosomal_uS11"/>
</dbReference>
<dbReference type="InterPro" id="IPR019981">
    <property type="entry name" value="Ribosomal_uS11_bac-type"/>
</dbReference>
<dbReference type="InterPro" id="IPR018102">
    <property type="entry name" value="Ribosomal_uS11_CS"/>
</dbReference>
<dbReference type="InterPro" id="IPR036967">
    <property type="entry name" value="Ribosomal_uS11_sf"/>
</dbReference>
<dbReference type="NCBIfam" id="NF003698">
    <property type="entry name" value="PRK05309.1"/>
    <property type="match status" value="1"/>
</dbReference>
<dbReference type="NCBIfam" id="TIGR03632">
    <property type="entry name" value="uS11_bact"/>
    <property type="match status" value="1"/>
</dbReference>
<dbReference type="PANTHER" id="PTHR11759">
    <property type="entry name" value="40S RIBOSOMAL PROTEIN S14/30S RIBOSOMAL PROTEIN S11"/>
    <property type="match status" value="1"/>
</dbReference>
<dbReference type="Pfam" id="PF00411">
    <property type="entry name" value="Ribosomal_S11"/>
    <property type="match status" value="1"/>
</dbReference>
<dbReference type="PIRSF" id="PIRSF002131">
    <property type="entry name" value="Ribosomal_S11"/>
    <property type="match status" value="1"/>
</dbReference>
<dbReference type="SUPFAM" id="SSF53137">
    <property type="entry name" value="Translational machinery components"/>
    <property type="match status" value="1"/>
</dbReference>
<dbReference type="PROSITE" id="PS00054">
    <property type="entry name" value="RIBOSOMAL_S11"/>
    <property type="match status" value="1"/>
</dbReference>
<organism>
    <name type="scientific">Pectobacterium carotovorum subsp. carotovorum (strain PC1)</name>
    <dbReference type="NCBI Taxonomy" id="561230"/>
    <lineage>
        <taxon>Bacteria</taxon>
        <taxon>Pseudomonadati</taxon>
        <taxon>Pseudomonadota</taxon>
        <taxon>Gammaproteobacteria</taxon>
        <taxon>Enterobacterales</taxon>
        <taxon>Pectobacteriaceae</taxon>
        <taxon>Pectobacterium</taxon>
    </lineage>
</organism>
<sequence length="129" mass="13859">MAKAPIRARKRVRKQVSDGVAHIHASFNNTIVTITDRQGNALGWATAGGSGFRGSRKSTPFAAQVAAERCAEAVKEYGIKNLEVMVKGPGPGRESTIRALNAAGFRITNITDVTPIPHNGCRPPKKRRV</sequence>
<feature type="chain" id="PRO_1000214369" description="Small ribosomal subunit protein uS11">
    <location>
        <begin position="1"/>
        <end position="129"/>
    </location>
</feature>
<gene>
    <name evidence="1" type="primary">rpsK</name>
    <name type="ordered locus">PC1_3799</name>
</gene>
<proteinExistence type="inferred from homology"/>
<keyword id="KW-0687">Ribonucleoprotein</keyword>
<keyword id="KW-0689">Ribosomal protein</keyword>
<keyword id="KW-0694">RNA-binding</keyword>
<keyword id="KW-0699">rRNA-binding</keyword>
<evidence type="ECO:0000255" key="1">
    <source>
        <dbReference type="HAMAP-Rule" id="MF_01310"/>
    </source>
</evidence>
<evidence type="ECO:0000305" key="2"/>
<comment type="function">
    <text evidence="1">Located on the platform of the 30S subunit, it bridges several disparate RNA helices of the 16S rRNA. Forms part of the Shine-Dalgarno cleft in the 70S ribosome.</text>
</comment>
<comment type="subunit">
    <text evidence="1">Part of the 30S ribosomal subunit. Interacts with proteins S7 and S18. Binds to IF-3.</text>
</comment>
<comment type="similarity">
    <text evidence="1">Belongs to the universal ribosomal protein uS11 family.</text>
</comment>